<sequence length="973" mass="107289">MSSLDKRKTQNRSKKNSYSICLKEKASAELKREELARIIFDGLYEFVGLLDAQGNVLEVNQAALNGAGVTLEEIRGKPFWKARWWQISKESVANQKRLVEAASSGEFVRCDIEILGKSGGREVIAVDFSLLPIRDEQENIVFLLAEGRNITDKKKAEAMLALKNHELEQLVERIRKLDNAKSDFFAKVSHELRTPLSLILGPLETIMEAESGRGSPYWKKFEVIQRNAMTLLKQVNTLLDLAKMDAQQMGLSYRRADLSQLTRVISSNFDGIAQQKSITLDAELPPHLIAEVDCEKYERIILNLLSNAFKFTPDGGLIRCHLSLSQPAHALITVSDSGPGIPQNLRKEIFERFHQLNQEGQQANQGTGLGLSIVKEFVELHHGTISVSDAPGGGALFQVKLPLNAPEGAYVANNAMSRSDNPQTVNPDEYLLPIPTAGSGAELPQFQSDQPRVLIVEDNPDMRCFIRDCLSTDYQVYVAPDGAKALELMCSAPPDLLITDLMMPVMSGDTLVHKVREKNEFAHIPIMVLSAKPDEKLRVKLLSESVQDYLLKPFSAHELRARVSNLISMKIAGDALRKELSDQSNDIALLTHRLIKSRHRLQQSNIALTASEARWKAVYENSAAGIVLTDTENRILNANPAFQRITGYTEKDLAQLSMEQLTPPNERTQMKQRLARLLQSGGAEYSVECSYLCKNGSTIWANASVSLMSPRVDEPQVILQIIDDITEKKQAQETLNQLQQELVQVSRSATMGEFAAYIAHEINQPLSAIMTNANAGTRWIGNEPPNIMEAKEALARIIRDSDRAADIIRMVRSFLKRQGPVLKPIDLKALVADTTLILKAPSQSNGVSLNVIAGDTLPAIMGDAVQIQQLVINLAMNSIEAMSQVGCETRQLALSFSSNASNDALIICVKDTGPGIPEDQIGQLFNAFYTTKKEGLGMGLAICLTIAEVHNGKIWAESPPAGGACFFVSIPVS</sequence>
<feature type="chain" id="PRO_0000423589" description="Sensor histidine kinase TmoS">
    <location>
        <begin position="1"/>
        <end position="973"/>
    </location>
</feature>
<feature type="domain" description="PAS 1" evidence="3">
    <location>
        <begin position="32"/>
        <end position="103"/>
    </location>
</feature>
<feature type="domain" description="PAC 1" evidence="4">
    <location>
        <begin position="108"/>
        <end position="162"/>
    </location>
</feature>
<feature type="domain" description="Histidine kinase 1" evidence="2">
    <location>
        <begin position="187"/>
        <end position="405"/>
    </location>
</feature>
<feature type="domain" description="Response regulatory" evidence="5">
    <location>
        <begin position="452"/>
        <end position="567"/>
    </location>
</feature>
<feature type="domain" description="PAS 2" evidence="3">
    <location>
        <begin position="611"/>
        <end position="681"/>
    </location>
</feature>
<feature type="domain" description="PAC 2" evidence="4">
    <location>
        <begin position="685"/>
        <end position="737"/>
    </location>
</feature>
<feature type="domain" description="Histidine kinase 2" evidence="2">
    <location>
        <begin position="757"/>
        <end position="973"/>
    </location>
</feature>
<feature type="modified residue" description="Phosphohistidine; by autocatalysis" evidence="2">
    <location>
        <position position="190"/>
    </location>
</feature>
<feature type="modified residue" description="4-aspartylphosphate" evidence="5">
    <location>
        <position position="500"/>
    </location>
</feature>
<feature type="modified residue" description="Phosphohistidine" evidence="1">
    <location>
        <position position="760"/>
    </location>
</feature>
<protein>
    <recommendedName>
        <fullName>Sensor histidine kinase TmoS</fullName>
        <ecNumber>2.7.13.3</ecNumber>
    </recommendedName>
</protein>
<organism>
    <name type="scientific">Ectopseudomonas mendocina</name>
    <name type="common">Pseudomonas mendocina</name>
    <dbReference type="NCBI Taxonomy" id="300"/>
    <lineage>
        <taxon>Bacteria</taxon>
        <taxon>Pseudomonadati</taxon>
        <taxon>Pseudomonadota</taxon>
        <taxon>Gammaproteobacteria</taxon>
        <taxon>Pseudomonadales</taxon>
        <taxon>Pseudomonadaceae</taxon>
        <taxon>Ectopseudomonas</taxon>
    </lineage>
</organism>
<gene>
    <name type="primary">tmoS</name>
</gene>
<dbReference type="EC" id="2.7.13.3"/>
<dbReference type="EMBL" id="AY052500">
    <property type="protein sequence ID" value="AAL13332.1"/>
    <property type="molecule type" value="Genomic_DNA"/>
</dbReference>
<dbReference type="SMR" id="Q8KIY1"/>
<dbReference type="GO" id="GO:0005737">
    <property type="term" value="C:cytoplasm"/>
    <property type="evidence" value="ECO:0007669"/>
    <property type="project" value="UniProtKB-SubCell"/>
</dbReference>
<dbReference type="GO" id="GO:0005524">
    <property type="term" value="F:ATP binding"/>
    <property type="evidence" value="ECO:0007669"/>
    <property type="project" value="UniProtKB-KW"/>
</dbReference>
<dbReference type="GO" id="GO:0000155">
    <property type="term" value="F:phosphorelay sensor kinase activity"/>
    <property type="evidence" value="ECO:0007669"/>
    <property type="project" value="InterPro"/>
</dbReference>
<dbReference type="CDD" id="cd16920">
    <property type="entry name" value="HATPase_TmoS-FixL-DctS-like"/>
    <property type="match status" value="1"/>
</dbReference>
<dbReference type="CDD" id="cd00082">
    <property type="entry name" value="HisKA"/>
    <property type="match status" value="2"/>
</dbReference>
<dbReference type="CDD" id="cd00130">
    <property type="entry name" value="PAS"/>
    <property type="match status" value="2"/>
</dbReference>
<dbReference type="CDD" id="cd00156">
    <property type="entry name" value="REC"/>
    <property type="match status" value="1"/>
</dbReference>
<dbReference type="FunFam" id="3.30.565.10:FF:000037">
    <property type="entry name" value="Hybrid sensor histidine kinase/response regulator"/>
    <property type="match status" value="1"/>
</dbReference>
<dbReference type="FunFam" id="3.40.50.2300:FF:000121">
    <property type="entry name" value="Sensor histidine kinase RcsC"/>
    <property type="match status" value="1"/>
</dbReference>
<dbReference type="FunFam" id="3.30.450.20:FF:000155">
    <property type="entry name" value="Sensor histidine kinase TodS"/>
    <property type="match status" value="1"/>
</dbReference>
<dbReference type="FunFam" id="1.10.287.130:FF:000055">
    <property type="entry name" value="Two-component sensor histidine kinase"/>
    <property type="match status" value="1"/>
</dbReference>
<dbReference type="FunFam" id="1.10.287.130:FF:000045">
    <property type="entry name" value="Two-component system sensor histidine kinase/response regulator"/>
    <property type="match status" value="1"/>
</dbReference>
<dbReference type="Gene3D" id="1.10.287.130">
    <property type="match status" value="2"/>
</dbReference>
<dbReference type="Gene3D" id="3.40.50.2300">
    <property type="match status" value="1"/>
</dbReference>
<dbReference type="Gene3D" id="3.30.565.10">
    <property type="entry name" value="Histidine kinase-like ATPase, C-terminal domain"/>
    <property type="match status" value="2"/>
</dbReference>
<dbReference type="Gene3D" id="3.30.450.20">
    <property type="entry name" value="PAS domain"/>
    <property type="match status" value="2"/>
</dbReference>
<dbReference type="InterPro" id="IPR011006">
    <property type="entry name" value="CheY-like_superfamily"/>
</dbReference>
<dbReference type="InterPro" id="IPR036890">
    <property type="entry name" value="HATPase_C_sf"/>
</dbReference>
<dbReference type="InterPro" id="IPR005467">
    <property type="entry name" value="His_kinase_dom"/>
</dbReference>
<dbReference type="InterPro" id="IPR003661">
    <property type="entry name" value="HisK_dim/P_dom"/>
</dbReference>
<dbReference type="InterPro" id="IPR036097">
    <property type="entry name" value="HisK_dim/P_sf"/>
</dbReference>
<dbReference type="InterPro" id="IPR001610">
    <property type="entry name" value="PAC"/>
</dbReference>
<dbReference type="InterPro" id="IPR000014">
    <property type="entry name" value="PAS"/>
</dbReference>
<dbReference type="InterPro" id="IPR000700">
    <property type="entry name" value="PAS-assoc_C"/>
</dbReference>
<dbReference type="InterPro" id="IPR035965">
    <property type="entry name" value="PAS-like_dom_sf"/>
</dbReference>
<dbReference type="InterPro" id="IPR013656">
    <property type="entry name" value="PAS_4"/>
</dbReference>
<dbReference type="InterPro" id="IPR004358">
    <property type="entry name" value="Sig_transdc_His_kin-like_C"/>
</dbReference>
<dbReference type="InterPro" id="IPR001789">
    <property type="entry name" value="Sig_transdc_resp-reg_receiver"/>
</dbReference>
<dbReference type="NCBIfam" id="TIGR00229">
    <property type="entry name" value="sensory_box"/>
    <property type="match status" value="2"/>
</dbReference>
<dbReference type="PANTHER" id="PTHR43547:SF2">
    <property type="entry name" value="HYBRID SIGNAL TRANSDUCTION HISTIDINE KINASE C"/>
    <property type="match status" value="1"/>
</dbReference>
<dbReference type="PANTHER" id="PTHR43547">
    <property type="entry name" value="TWO-COMPONENT HISTIDINE KINASE"/>
    <property type="match status" value="1"/>
</dbReference>
<dbReference type="Pfam" id="PF02518">
    <property type="entry name" value="HATPase_c"/>
    <property type="match status" value="2"/>
</dbReference>
<dbReference type="Pfam" id="PF00512">
    <property type="entry name" value="HisKA"/>
    <property type="match status" value="2"/>
</dbReference>
<dbReference type="Pfam" id="PF08448">
    <property type="entry name" value="PAS_4"/>
    <property type="match status" value="1"/>
</dbReference>
<dbReference type="Pfam" id="PF13426">
    <property type="entry name" value="PAS_9"/>
    <property type="match status" value="1"/>
</dbReference>
<dbReference type="Pfam" id="PF00072">
    <property type="entry name" value="Response_reg"/>
    <property type="match status" value="1"/>
</dbReference>
<dbReference type="PRINTS" id="PR00344">
    <property type="entry name" value="BCTRLSENSOR"/>
</dbReference>
<dbReference type="SMART" id="SM00387">
    <property type="entry name" value="HATPase_c"/>
    <property type="match status" value="2"/>
</dbReference>
<dbReference type="SMART" id="SM00388">
    <property type="entry name" value="HisKA"/>
    <property type="match status" value="2"/>
</dbReference>
<dbReference type="SMART" id="SM00086">
    <property type="entry name" value="PAC"/>
    <property type="match status" value="2"/>
</dbReference>
<dbReference type="SMART" id="SM00091">
    <property type="entry name" value="PAS"/>
    <property type="match status" value="2"/>
</dbReference>
<dbReference type="SMART" id="SM00448">
    <property type="entry name" value="REC"/>
    <property type="match status" value="1"/>
</dbReference>
<dbReference type="SUPFAM" id="SSF55874">
    <property type="entry name" value="ATPase domain of HSP90 chaperone/DNA topoisomerase II/histidine kinase"/>
    <property type="match status" value="2"/>
</dbReference>
<dbReference type="SUPFAM" id="SSF52172">
    <property type="entry name" value="CheY-like"/>
    <property type="match status" value="1"/>
</dbReference>
<dbReference type="SUPFAM" id="SSF47384">
    <property type="entry name" value="Homodimeric domain of signal transducing histidine kinase"/>
    <property type="match status" value="2"/>
</dbReference>
<dbReference type="SUPFAM" id="SSF55785">
    <property type="entry name" value="PYP-like sensor domain (PAS domain)"/>
    <property type="match status" value="2"/>
</dbReference>
<dbReference type="PROSITE" id="PS50109">
    <property type="entry name" value="HIS_KIN"/>
    <property type="match status" value="2"/>
</dbReference>
<dbReference type="PROSITE" id="PS50113">
    <property type="entry name" value="PAC"/>
    <property type="match status" value="2"/>
</dbReference>
<dbReference type="PROSITE" id="PS50112">
    <property type="entry name" value="PAS"/>
    <property type="match status" value="2"/>
</dbReference>
<dbReference type="PROSITE" id="PS50110">
    <property type="entry name" value="RESPONSE_REGULATORY"/>
    <property type="match status" value="1"/>
</dbReference>
<name>TMOS_ECTME</name>
<proteinExistence type="evidence at protein level"/>
<accession>Q8KIY1</accession>
<comment type="function">
    <text evidence="6 7">Member of the two-component regulatory system TmoS/TmoT involved in the regulation of toluene degradation. Probably phosphorylates TmoT via a four-step phosphorelay in response to toluene. Can also be induced by benzene and ethylbenzene.</text>
</comment>
<comment type="catalytic activity">
    <reaction>
        <text>ATP + protein L-histidine = ADP + protein N-phospho-L-histidine.</text>
        <dbReference type="EC" id="2.7.13.3"/>
    </reaction>
</comment>
<comment type="activity regulation">
    <text evidence="7">Activity is regulated by agonists and antagonists. Binding of agonists such as toluene or benzene to TmoS stimulates autophosphorylation. Toluene causes the most pronounced increase, followed by benzene, chlorobenzene and ethylbenzene. Activity is inhibited by antagonists such as o-xylene, o-chlorotoluene and trimethylbenzene isomers, which bind to TmoS but do not stimulate autophosphorylation.</text>
</comment>
<comment type="subcellular location">
    <subcellularLocation>
        <location evidence="7">Cytoplasm</location>
    </subcellularLocation>
</comment>
<comment type="PTM">
    <text evidence="8">Autophosphorylated. Activation requires a sequential transfer of a phosphate group from a His in the primary transmitter domain, to an Asp in the receiver domain and to a His in the secondary transmitter domain (Probable).</text>
</comment>
<reference key="1">
    <citation type="journal article" date="2002" name="J. Bacteriol.">
        <title>Cross-regulation between a novel two-component signal transduction system for catabolism of toluene in Pseudomonas mendocina and the TodST system from Pseudomonas putida.</title>
        <authorList>
            <person name="Ramos-Gonzalez M.I."/>
            <person name="Olson M."/>
            <person name="Gatenby A.A."/>
            <person name="Mosqueda G."/>
            <person name="Manzanera M."/>
            <person name="Campos M.J."/>
            <person name="Vichez S."/>
            <person name="Ramos J.L."/>
        </authorList>
    </citation>
    <scope>NUCLEOTIDE SEQUENCE [GENOMIC DNA]</scope>
    <scope>FUNCTION</scope>
    <scope>GENE NAME</scope>
    <source>
        <strain>KR1</strain>
    </source>
</reference>
<reference key="2">
    <citation type="journal article" date="2012" name="Microb. Biotechnol.">
        <title>Study of the TmoS/TmoT two-component system: towards the functional characterization of the family of TodS/TodT like systems.</title>
        <authorList>
            <person name="Silva-Jimenez H."/>
            <person name="Garcia-Fontana C."/>
            <person name="Cadirci B.H."/>
            <person name="Ramos-Gonzalez M.I."/>
            <person name="Ramos J.L."/>
            <person name="Krell T."/>
        </authorList>
    </citation>
    <scope>FUNCTION</scope>
    <scope>ACTIVITY REGULATION</scope>
    <scope>SUBCELLULAR LOCATION</scope>
    <scope>AUTOPHOSPHORYLATION</scope>
    <source>
        <strain>KR1</strain>
    </source>
</reference>
<keyword id="KW-0067">ATP-binding</keyword>
<keyword id="KW-0963">Cytoplasm</keyword>
<keyword id="KW-0418">Kinase</keyword>
<keyword id="KW-0547">Nucleotide-binding</keyword>
<keyword id="KW-0597">Phosphoprotein</keyword>
<keyword id="KW-0677">Repeat</keyword>
<keyword id="KW-0808">Transferase</keyword>
<keyword id="KW-0902">Two-component regulatory system</keyword>
<evidence type="ECO:0000250" key="1"/>
<evidence type="ECO:0000255" key="2">
    <source>
        <dbReference type="PROSITE-ProRule" id="PRU00107"/>
    </source>
</evidence>
<evidence type="ECO:0000255" key="3">
    <source>
        <dbReference type="PROSITE-ProRule" id="PRU00140"/>
    </source>
</evidence>
<evidence type="ECO:0000255" key="4">
    <source>
        <dbReference type="PROSITE-ProRule" id="PRU00141"/>
    </source>
</evidence>
<evidence type="ECO:0000255" key="5">
    <source>
        <dbReference type="PROSITE-ProRule" id="PRU00169"/>
    </source>
</evidence>
<evidence type="ECO:0000269" key="6">
    <source>
    </source>
</evidence>
<evidence type="ECO:0000269" key="7">
    <source>
    </source>
</evidence>
<evidence type="ECO:0000305" key="8"/>